<keyword id="KW-1003">Cell membrane</keyword>
<keyword id="KW-0472">Membrane</keyword>
<keyword id="KW-1185">Reference proteome</keyword>
<keyword id="KW-0812">Transmembrane</keyword>
<keyword id="KW-1133">Transmembrane helix</keyword>
<gene>
    <name type="ordered locus">KLLA0C05060g</name>
</gene>
<evidence type="ECO:0000250" key="1"/>
<evidence type="ECO:0000255" key="2"/>
<evidence type="ECO:0000305" key="3"/>
<comment type="function">
    <text evidence="1">Required for the proteolytic cleavage of the transcription factor RIM101 in response to alkaline ambient pH.</text>
</comment>
<comment type="subcellular location">
    <subcellularLocation>
        <location evidence="1">Cell membrane</location>
        <topology evidence="1">Multi-pass membrane protein</topology>
    </subcellularLocation>
</comment>
<comment type="similarity">
    <text evidence="3">Belongs to the palI/RIM9 family.</text>
</comment>
<reference key="1">
    <citation type="journal article" date="2004" name="Nature">
        <title>Genome evolution in yeasts.</title>
        <authorList>
            <person name="Dujon B."/>
            <person name="Sherman D."/>
            <person name="Fischer G."/>
            <person name="Durrens P."/>
            <person name="Casaregola S."/>
            <person name="Lafontaine I."/>
            <person name="de Montigny J."/>
            <person name="Marck C."/>
            <person name="Neuveglise C."/>
            <person name="Talla E."/>
            <person name="Goffard N."/>
            <person name="Frangeul L."/>
            <person name="Aigle M."/>
            <person name="Anthouard V."/>
            <person name="Babour A."/>
            <person name="Barbe V."/>
            <person name="Barnay S."/>
            <person name="Blanchin S."/>
            <person name="Beckerich J.-M."/>
            <person name="Beyne E."/>
            <person name="Bleykasten C."/>
            <person name="Boisrame A."/>
            <person name="Boyer J."/>
            <person name="Cattolico L."/>
            <person name="Confanioleri F."/>
            <person name="de Daruvar A."/>
            <person name="Despons L."/>
            <person name="Fabre E."/>
            <person name="Fairhead C."/>
            <person name="Ferry-Dumazet H."/>
            <person name="Groppi A."/>
            <person name="Hantraye F."/>
            <person name="Hennequin C."/>
            <person name="Jauniaux N."/>
            <person name="Joyet P."/>
            <person name="Kachouri R."/>
            <person name="Kerrest A."/>
            <person name="Koszul R."/>
            <person name="Lemaire M."/>
            <person name="Lesur I."/>
            <person name="Ma L."/>
            <person name="Muller H."/>
            <person name="Nicaud J.-M."/>
            <person name="Nikolski M."/>
            <person name="Oztas S."/>
            <person name="Ozier-Kalogeropoulos O."/>
            <person name="Pellenz S."/>
            <person name="Potier S."/>
            <person name="Richard G.-F."/>
            <person name="Straub M.-L."/>
            <person name="Suleau A."/>
            <person name="Swennen D."/>
            <person name="Tekaia F."/>
            <person name="Wesolowski-Louvel M."/>
            <person name="Westhof E."/>
            <person name="Wirth B."/>
            <person name="Zeniou-Meyer M."/>
            <person name="Zivanovic Y."/>
            <person name="Bolotin-Fukuhara M."/>
            <person name="Thierry A."/>
            <person name="Bouchier C."/>
            <person name="Caudron B."/>
            <person name="Scarpelli C."/>
            <person name="Gaillardin C."/>
            <person name="Weissenbach J."/>
            <person name="Wincker P."/>
            <person name="Souciet J.-L."/>
        </authorList>
    </citation>
    <scope>NUCLEOTIDE SEQUENCE [LARGE SCALE GENOMIC DNA]</scope>
    <source>
        <strain>ATCC 8585 / CBS 2359 / DSM 70799 / NBRC 1267 / NRRL Y-1140 / WM37</strain>
    </source>
</reference>
<organism>
    <name type="scientific">Kluyveromyces lactis (strain ATCC 8585 / CBS 2359 / DSM 70799 / NBRC 1267 / NRRL Y-1140 / WM37)</name>
    <name type="common">Yeast</name>
    <name type="synonym">Candida sphaerica</name>
    <dbReference type="NCBI Taxonomy" id="284590"/>
    <lineage>
        <taxon>Eukaryota</taxon>
        <taxon>Fungi</taxon>
        <taxon>Dikarya</taxon>
        <taxon>Ascomycota</taxon>
        <taxon>Saccharomycotina</taxon>
        <taxon>Saccharomycetes</taxon>
        <taxon>Saccharomycetales</taxon>
        <taxon>Saccharomycetaceae</taxon>
        <taxon>Kluyveromyces</taxon>
    </lineage>
</organism>
<dbReference type="EMBL" id="CR382123">
    <property type="protein sequence ID" value="CAH01277.1"/>
    <property type="molecule type" value="Genomic_DNA"/>
</dbReference>
<dbReference type="RefSeq" id="XP_452426.1">
    <property type="nucleotide sequence ID" value="XM_452426.1"/>
</dbReference>
<dbReference type="FunCoup" id="Q6CUG3">
    <property type="interactions" value="15"/>
</dbReference>
<dbReference type="STRING" id="284590.Q6CUG3"/>
<dbReference type="PaxDb" id="284590-Q6CUG3"/>
<dbReference type="KEGG" id="kla:KLLA0_C05060g"/>
<dbReference type="eggNOG" id="ENOG502S1J0">
    <property type="taxonomic scope" value="Eukaryota"/>
</dbReference>
<dbReference type="HOGENOM" id="CLU_084537_0_0_1"/>
<dbReference type="InParanoid" id="Q6CUG3"/>
<dbReference type="OMA" id="ELEIPWC"/>
<dbReference type="Proteomes" id="UP000000598">
    <property type="component" value="Chromosome C"/>
</dbReference>
<dbReference type="GO" id="GO:0032153">
    <property type="term" value="C:cell division site"/>
    <property type="evidence" value="ECO:0007669"/>
    <property type="project" value="TreeGrafter"/>
</dbReference>
<dbReference type="GO" id="GO:0035838">
    <property type="term" value="C:growing cell tip"/>
    <property type="evidence" value="ECO:0007669"/>
    <property type="project" value="TreeGrafter"/>
</dbReference>
<dbReference type="GO" id="GO:0005886">
    <property type="term" value="C:plasma membrane"/>
    <property type="evidence" value="ECO:0007669"/>
    <property type="project" value="UniProtKB-SubCell"/>
</dbReference>
<dbReference type="InterPro" id="IPR051380">
    <property type="entry name" value="pH-response_reg_palI/RIM9"/>
</dbReference>
<dbReference type="InterPro" id="IPR009571">
    <property type="entry name" value="SUR7/Rim9-like_fungi"/>
</dbReference>
<dbReference type="PANTHER" id="PTHR28013">
    <property type="entry name" value="PROTEIN DCV1-RELATED"/>
    <property type="match status" value="1"/>
</dbReference>
<dbReference type="PANTHER" id="PTHR28013:SF3">
    <property type="entry name" value="PROTEIN DCV1-RELATED"/>
    <property type="match status" value="1"/>
</dbReference>
<dbReference type="Pfam" id="PF06687">
    <property type="entry name" value="SUR7"/>
    <property type="match status" value="1"/>
</dbReference>
<sequence>MLVKIVLVVLLTLALVFECFSTISVPITIGLYISEYNGYRFGVFGWCKVDRSVCSPIRIGYSKDDILLFNEQEYLHLPNHAKYALSNLLLVHVLAFVCVTILWVFGMLTCFRCIKTSRRMLIIAVLWSMLTFMVTLLGFLIDILIFSSHVTWCTWLTLASAFFTVLSGTVLCVMRRNLTYDKFLESKPEKHGVYVPLCRLNDVEELEIPWCNTMNHQALTAPTPM</sequence>
<accession>Q6CUG3</accession>
<proteinExistence type="inferred from homology"/>
<feature type="chain" id="PRO_0000058207" description="pH-response regulator palI/RIM9 homolog 2">
    <location>
        <begin position="1"/>
        <end position="225"/>
    </location>
</feature>
<feature type="topological domain" description="Cytoplasmic" evidence="2">
    <location>
        <begin position="1"/>
        <end position="4"/>
    </location>
</feature>
<feature type="transmembrane region" description="Helical" evidence="2">
    <location>
        <begin position="5"/>
        <end position="25"/>
    </location>
</feature>
<feature type="topological domain" description="Extracellular" evidence="2">
    <location>
        <begin position="26"/>
        <end position="87"/>
    </location>
</feature>
<feature type="transmembrane region" description="Helical" evidence="2">
    <location>
        <begin position="88"/>
        <end position="108"/>
    </location>
</feature>
<feature type="topological domain" description="Cytoplasmic" evidence="2">
    <location>
        <begin position="109"/>
        <end position="120"/>
    </location>
</feature>
<feature type="transmembrane region" description="Helical" evidence="2">
    <location>
        <begin position="121"/>
        <end position="141"/>
    </location>
</feature>
<feature type="topological domain" description="Extracellular" evidence="2">
    <location>
        <begin position="142"/>
        <end position="153"/>
    </location>
</feature>
<feature type="transmembrane region" description="Helical" evidence="2">
    <location>
        <begin position="154"/>
        <end position="174"/>
    </location>
</feature>
<feature type="topological domain" description="Cytoplasmic" evidence="2">
    <location>
        <begin position="175"/>
        <end position="225"/>
    </location>
</feature>
<name>PALI2_KLULA</name>
<protein>
    <recommendedName>
        <fullName>pH-response regulator palI/RIM9 homolog 2</fullName>
    </recommendedName>
</protein>